<gene>
    <name evidence="1" type="primary">hemL</name>
    <name type="ordered locus">Rfer_1369</name>
</gene>
<name>GSA_ALBFT</name>
<comment type="catalytic activity">
    <reaction evidence="1">
        <text>(S)-4-amino-5-oxopentanoate = 5-aminolevulinate</text>
        <dbReference type="Rhea" id="RHEA:14265"/>
        <dbReference type="ChEBI" id="CHEBI:57501"/>
        <dbReference type="ChEBI" id="CHEBI:356416"/>
        <dbReference type="EC" id="5.4.3.8"/>
    </reaction>
</comment>
<comment type="cofactor">
    <cofactor evidence="1">
        <name>pyridoxal 5'-phosphate</name>
        <dbReference type="ChEBI" id="CHEBI:597326"/>
    </cofactor>
</comment>
<comment type="pathway">
    <text evidence="1">Porphyrin-containing compound metabolism; protoporphyrin-IX biosynthesis; 5-aminolevulinate from L-glutamyl-tRNA(Glu): step 2/2.</text>
</comment>
<comment type="subunit">
    <text evidence="1">Homodimer.</text>
</comment>
<comment type="subcellular location">
    <subcellularLocation>
        <location evidence="1">Cytoplasm</location>
    </subcellularLocation>
</comment>
<comment type="similarity">
    <text evidence="1">Belongs to the class-III pyridoxal-phosphate-dependent aminotransferase family. HemL subfamily.</text>
</comment>
<dbReference type="EC" id="5.4.3.8" evidence="1"/>
<dbReference type="EMBL" id="CP000267">
    <property type="protein sequence ID" value="ABD69103.1"/>
    <property type="molecule type" value="Genomic_DNA"/>
</dbReference>
<dbReference type="RefSeq" id="WP_011463671.1">
    <property type="nucleotide sequence ID" value="NC_007908.1"/>
</dbReference>
<dbReference type="SMR" id="Q21YQ0"/>
<dbReference type="STRING" id="338969.Rfer_1369"/>
<dbReference type="KEGG" id="rfr:Rfer_1369"/>
<dbReference type="eggNOG" id="COG0001">
    <property type="taxonomic scope" value="Bacteria"/>
</dbReference>
<dbReference type="HOGENOM" id="CLU_016922_1_5_4"/>
<dbReference type="OrthoDB" id="3398487at2"/>
<dbReference type="UniPathway" id="UPA00251">
    <property type="reaction ID" value="UER00317"/>
</dbReference>
<dbReference type="Proteomes" id="UP000008332">
    <property type="component" value="Chromosome"/>
</dbReference>
<dbReference type="GO" id="GO:0005737">
    <property type="term" value="C:cytoplasm"/>
    <property type="evidence" value="ECO:0007669"/>
    <property type="project" value="UniProtKB-SubCell"/>
</dbReference>
<dbReference type="GO" id="GO:0042286">
    <property type="term" value="F:glutamate-1-semialdehyde 2,1-aminomutase activity"/>
    <property type="evidence" value="ECO:0007669"/>
    <property type="project" value="UniProtKB-UniRule"/>
</dbReference>
<dbReference type="GO" id="GO:0030170">
    <property type="term" value="F:pyridoxal phosphate binding"/>
    <property type="evidence" value="ECO:0007669"/>
    <property type="project" value="InterPro"/>
</dbReference>
<dbReference type="GO" id="GO:0008483">
    <property type="term" value="F:transaminase activity"/>
    <property type="evidence" value="ECO:0007669"/>
    <property type="project" value="InterPro"/>
</dbReference>
<dbReference type="GO" id="GO:0006782">
    <property type="term" value="P:protoporphyrinogen IX biosynthetic process"/>
    <property type="evidence" value="ECO:0007669"/>
    <property type="project" value="UniProtKB-UniRule"/>
</dbReference>
<dbReference type="CDD" id="cd00610">
    <property type="entry name" value="OAT_like"/>
    <property type="match status" value="1"/>
</dbReference>
<dbReference type="FunFam" id="3.40.640.10:FF:000021">
    <property type="entry name" value="Glutamate-1-semialdehyde 2,1-aminomutase"/>
    <property type="match status" value="1"/>
</dbReference>
<dbReference type="Gene3D" id="3.90.1150.10">
    <property type="entry name" value="Aspartate Aminotransferase, domain 1"/>
    <property type="match status" value="1"/>
</dbReference>
<dbReference type="Gene3D" id="3.40.640.10">
    <property type="entry name" value="Type I PLP-dependent aspartate aminotransferase-like (Major domain)"/>
    <property type="match status" value="1"/>
</dbReference>
<dbReference type="HAMAP" id="MF_00375">
    <property type="entry name" value="HemL_aminotrans_3"/>
    <property type="match status" value="1"/>
</dbReference>
<dbReference type="InterPro" id="IPR004639">
    <property type="entry name" value="4pyrrol_synth_GluAld_NH2Trfase"/>
</dbReference>
<dbReference type="InterPro" id="IPR005814">
    <property type="entry name" value="Aminotrans_3"/>
</dbReference>
<dbReference type="InterPro" id="IPR015424">
    <property type="entry name" value="PyrdxlP-dep_Trfase"/>
</dbReference>
<dbReference type="InterPro" id="IPR015421">
    <property type="entry name" value="PyrdxlP-dep_Trfase_major"/>
</dbReference>
<dbReference type="InterPro" id="IPR015422">
    <property type="entry name" value="PyrdxlP-dep_Trfase_small"/>
</dbReference>
<dbReference type="NCBIfam" id="TIGR00713">
    <property type="entry name" value="hemL"/>
    <property type="match status" value="1"/>
</dbReference>
<dbReference type="NCBIfam" id="NF000818">
    <property type="entry name" value="PRK00062.1"/>
    <property type="match status" value="1"/>
</dbReference>
<dbReference type="PANTHER" id="PTHR43713">
    <property type="entry name" value="GLUTAMATE-1-SEMIALDEHYDE 2,1-AMINOMUTASE"/>
    <property type="match status" value="1"/>
</dbReference>
<dbReference type="PANTHER" id="PTHR43713:SF3">
    <property type="entry name" value="GLUTAMATE-1-SEMIALDEHYDE 2,1-AMINOMUTASE 1, CHLOROPLASTIC-RELATED"/>
    <property type="match status" value="1"/>
</dbReference>
<dbReference type="Pfam" id="PF00202">
    <property type="entry name" value="Aminotran_3"/>
    <property type="match status" value="1"/>
</dbReference>
<dbReference type="SUPFAM" id="SSF53383">
    <property type="entry name" value="PLP-dependent transferases"/>
    <property type="match status" value="1"/>
</dbReference>
<keyword id="KW-0963">Cytoplasm</keyword>
<keyword id="KW-0413">Isomerase</keyword>
<keyword id="KW-0627">Porphyrin biosynthesis</keyword>
<keyword id="KW-0663">Pyridoxal phosphate</keyword>
<keyword id="KW-1185">Reference proteome</keyword>
<protein>
    <recommendedName>
        <fullName evidence="1">Glutamate-1-semialdehyde 2,1-aminomutase</fullName>
        <shortName evidence="1">GSA</shortName>
        <ecNumber evidence="1">5.4.3.8</ecNumber>
    </recommendedName>
    <alternativeName>
        <fullName evidence="1">Glutamate-1-semialdehyde aminotransferase</fullName>
        <shortName evidence="1">GSA-AT</shortName>
    </alternativeName>
</protein>
<organism>
    <name type="scientific">Albidiferax ferrireducens (strain ATCC BAA-621 / DSM 15236 / T118)</name>
    <name type="common">Rhodoferax ferrireducens</name>
    <dbReference type="NCBI Taxonomy" id="338969"/>
    <lineage>
        <taxon>Bacteria</taxon>
        <taxon>Pseudomonadati</taxon>
        <taxon>Pseudomonadota</taxon>
        <taxon>Betaproteobacteria</taxon>
        <taxon>Burkholderiales</taxon>
        <taxon>Comamonadaceae</taxon>
        <taxon>Rhodoferax</taxon>
    </lineage>
</organism>
<sequence length="436" mass="46526">MTLNTDNNQILFERAKRVIPGGVNSPVRAFKAVGGTPRFVKRAQGAYFWDANNQRYTDFIGSWGPMILGHGHPAVVEAVQAAVLEGFSYGAPTEREVELAEEILRLVPSMDMVRLVSSGTEAAMSTIRLARGATGRSKLIKFEGCYHGHADALLVKAGSGLATFGNPTSAGVPPEVVQHTVVLEYNNIEQLEEAFAMQGSEIACLMMEPICGNMNFVRASVPFVKRCRELCTQYGALLVFDEVMTGFRVALGGAQSVYAKEIPGFEPDMTVMGKVIGGGMPLAAFGAKRAVMEHLAPLGTVYQAGTLSGNPVATACGLATLREISKPGFYESLARTTRSLTDGLKAAATAEGLAFSADSEGGMFGFFLLDTLPQNYVQVMKSDSARFNQLFHGLLDRGVYIAPALYEAGFVSAAHTAEDIAATVAAARAVFKIISK</sequence>
<reference key="1">
    <citation type="submission" date="2006-02" db="EMBL/GenBank/DDBJ databases">
        <title>Complete sequence of chromosome of Rhodoferax ferrireducens DSM 15236.</title>
        <authorList>
            <person name="Copeland A."/>
            <person name="Lucas S."/>
            <person name="Lapidus A."/>
            <person name="Barry K."/>
            <person name="Detter J.C."/>
            <person name="Glavina del Rio T."/>
            <person name="Hammon N."/>
            <person name="Israni S."/>
            <person name="Pitluck S."/>
            <person name="Brettin T."/>
            <person name="Bruce D."/>
            <person name="Han C."/>
            <person name="Tapia R."/>
            <person name="Gilna P."/>
            <person name="Kiss H."/>
            <person name="Schmutz J."/>
            <person name="Larimer F."/>
            <person name="Land M."/>
            <person name="Kyrpides N."/>
            <person name="Ivanova N."/>
            <person name="Richardson P."/>
        </authorList>
    </citation>
    <scope>NUCLEOTIDE SEQUENCE [LARGE SCALE GENOMIC DNA]</scope>
    <source>
        <strain>ATCC BAA-621 / DSM 15236 / T118</strain>
    </source>
</reference>
<accession>Q21YQ0</accession>
<feature type="chain" id="PRO_0000243611" description="Glutamate-1-semialdehyde 2,1-aminomutase">
    <location>
        <begin position="1"/>
        <end position="436"/>
    </location>
</feature>
<feature type="modified residue" description="N6-(pyridoxal phosphate)lysine" evidence="1">
    <location>
        <position position="274"/>
    </location>
</feature>
<evidence type="ECO:0000255" key="1">
    <source>
        <dbReference type="HAMAP-Rule" id="MF_00375"/>
    </source>
</evidence>
<proteinExistence type="inferred from homology"/>